<comment type="function">
    <text evidence="1">Part of a membrane-bound complex that couples electron transfer with translocation of ions across the membrane. Required to maintain the reduced state of SoxR.</text>
</comment>
<comment type="subunit">
    <text evidence="1">The complex is composed of six subunits: RsxA, RsxB, RsxC, RsxD, RsxE and RsxG.</text>
</comment>
<comment type="subcellular location">
    <subcellularLocation>
        <location evidence="1">Cell inner membrane</location>
        <topology evidence="1">Multi-pass membrane protein</topology>
    </subcellularLocation>
</comment>
<comment type="similarity">
    <text evidence="1">Belongs to the NqrDE/RnfAE family.</text>
</comment>
<reference key="1">
    <citation type="journal article" date="2005" name="Nucleic Acids Res.">
        <title>Genome dynamics and diversity of Shigella species, the etiologic agents of bacillary dysentery.</title>
        <authorList>
            <person name="Yang F."/>
            <person name="Yang J."/>
            <person name="Zhang X."/>
            <person name="Chen L."/>
            <person name="Jiang Y."/>
            <person name="Yan Y."/>
            <person name="Tang X."/>
            <person name="Wang J."/>
            <person name="Xiong Z."/>
            <person name="Dong J."/>
            <person name="Xue Y."/>
            <person name="Zhu Y."/>
            <person name="Xu X."/>
            <person name="Sun L."/>
            <person name="Chen S."/>
            <person name="Nie H."/>
            <person name="Peng J."/>
            <person name="Xu J."/>
            <person name="Wang Y."/>
            <person name="Yuan Z."/>
            <person name="Wen Y."/>
            <person name="Yao Z."/>
            <person name="Shen Y."/>
            <person name="Qiang B."/>
            <person name="Hou Y."/>
            <person name="Yu J."/>
            <person name="Jin Q."/>
        </authorList>
    </citation>
    <scope>NUCLEOTIDE SEQUENCE [LARGE SCALE GENOMIC DNA]</scope>
    <source>
        <strain>Sb227</strain>
    </source>
</reference>
<evidence type="ECO:0000255" key="1">
    <source>
        <dbReference type="HAMAP-Rule" id="MF_00478"/>
    </source>
</evidence>
<dbReference type="EC" id="7.-.-.-" evidence="1"/>
<dbReference type="EMBL" id="CP000036">
    <property type="protein sequence ID" value="ABB66119.1"/>
    <property type="molecule type" value="Genomic_DNA"/>
</dbReference>
<dbReference type="RefSeq" id="WP_001289657.1">
    <property type="nucleotide sequence ID" value="NC_007613.1"/>
</dbReference>
<dbReference type="SMR" id="Q320Y9"/>
<dbReference type="GeneID" id="93775784"/>
<dbReference type="KEGG" id="sbo:SBO_1502"/>
<dbReference type="HOGENOM" id="CLU_046659_1_0_6"/>
<dbReference type="Proteomes" id="UP000007067">
    <property type="component" value="Chromosome"/>
</dbReference>
<dbReference type="GO" id="GO:0005886">
    <property type="term" value="C:plasma membrane"/>
    <property type="evidence" value="ECO:0007669"/>
    <property type="project" value="UniProtKB-SubCell"/>
</dbReference>
<dbReference type="GO" id="GO:0022900">
    <property type="term" value="P:electron transport chain"/>
    <property type="evidence" value="ECO:0007669"/>
    <property type="project" value="UniProtKB-UniRule"/>
</dbReference>
<dbReference type="HAMAP" id="MF_00478">
    <property type="entry name" value="RsxE_RnfE"/>
    <property type="match status" value="1"/>
</dbReference>
<dbReference type="InterPro" id="IPR003667">
    <property type="entry name" value="NqrDE/RnfAE"/>
</dbReference>
<dbReference type="InterPro" id="IPR010968">
    <property type="entry name" value="RnfE"/>
</dbReference>
<dbReference type="NCBIfam" id="NF009070">
    <property type="entry name" value="PRK12405.1"/>
    <property type="match status" value="1"/>
</dbReference>
<dbReference type="NCBIfam" id="TIGR01948">
    <property type="entry name" value="rnfE"/>
    <property type="match status" value="1"/>
</dbReference>
<dbReference type="PANTHER" id="PTHR30586">
    <property type="entry name" value="ELECTRON TRANSPORT COMPLEX PROTEIN RNFE"/>
    <property type="match status" value="1"/>
</dbReference>
<dbReference type="PANTHER" id="PTHR30586:SF0">
    <property type="entry name" value="ION-TRANSLOCATING OXIDOREDUCTASE COMPLEX SUBUNIT E"/>
    <property type="match status" value="1"/>
</dbReference>
<dbReference type="Pfam" id="PF02508">
    <property type="entry name" value="Rnf-Nqr"/>
    <property type="match status" value="1"/>
</dbReference>
<dbReference type="PIRSF" id="PIRSF006102">
    <property type="entry name" value="NQR_DE"/>
    <property type="match status" value="1"/>
</dbReference>
<protein>
    <recommendedName>
        <fullName evidence="1">Ion-translocating oxidoreductase complex subunit E</fullName>
        <ecNumber evidence="1">7.-.-.-</ecNumber>
    </recommendedName>
    <alternativeName>
        <fullName evidence="1">Rsx electron transport complex subunit E</fullName>
    </alternativeName>
</protein>
<accession>Q320Y9</accession>
<keyword id="KW-0997">Cell inner membrane</keyword>
<keyword id="KW-1003">Cell membrane</keyword>
<keyword id="KW-0249">Electron transport</keyword>
<keyword id="KW-0472">Membrane</keyword>
<keyword id="KW-1278">Translocase</keyword>
<keyword id="KW-0812">Transmembrane</keyword>
<keyword id="KW-1133">Transmembrane helix</keyword>
<keyword id="KW-0813">Transport</keyword>
<feature type="chain" id="PRO_1000014109" description="Ion-translocating oxidoreductase complex subunit E">
    <location>
        <begin position="1"/>
        <end position="231"/>
    </location>
</feature>
<feature type="transmembrane region" description="Helical" evidence="1">
    <location>
        <begin position="18"/>
        <end position="38"/>
    </location>
</feature>
<feature type="transmembrane region" description="Helical" evidence="1">
    <location>
        <begin position="39"/>
        <end position="59"/>
    </location>
</feature>
<feature type="transmembrane region" description="Helical" evidence="1">
    <location>
        <begin position="63"/>
        <end position="83"/>
    </location>
</feature>
<feature type="transmembrane region" description="Helical" evidence="1">
    <location>
        <begin position="86"/>
        <end position="106"/>
    </location>
</feature>
<feature type="transmembrane region" description="Helical" evidence="1">
    <location>
        <begin position="125"/>
        <end position="145"/>
    </location>
</feature>
<feature type="transmembrane region" description="Helical" evidence="1">
    <location>
        <begin position="182"/>
        <end position="202"/>
    </location>
</feature>
<name>RSXE_SHIBS</name>
<sequence length="231" mass="24489">MSEIKDVIVQGLWKNNSALVQLLGLCPLLAVTSTATNALGLGLATTLVLTLTNLTISTLRHWTPAEIRIPIYVMIIASVVSAVQMLINAYAFGLYQSLGIFIPLIVTNCIVVGRAEAFAAKKGPALSALDGFSIGMGATCAMFVLGSLREIIGNGTLFDGADALLGSWAKVLRVEIFHTDSPFLLAMLPPGAFIGLGLMLAGKYLIDERMKKRRTEAAAERALPNGETGNV</sequence>
<organism>
    <name type="scientific">Shigella boydii serotype 4 (strain Sb227)</name>
    <dbReference type="NCBI Taxonomy" id="300268"/>
    <lineage>
        <taxon>Bacteria</taxon>
        <taxon>Pseudomonadati</taxon>
        <taxon>Pseudomonadota</taxon>
        <taxon>Gammaproteobacteria</taxon>
        <taxon>Enterobacterales</taxon>
        <taxon>Enterobacteriaceae</taxon>
        <taxon>Shigella</taxon>
    </lineage>
</organism>
<gene>
    <name evidence="1" type="primary">rsxE</name>
    <name type="ordered locus">SBO_1502</name>
</gene>
<proteinExistence type="inferred from homology"/>